<comment type="function">
    <text evidence="2">Multimodal toxin that enhances nociceptor excitability mainly by the simultaneous stimulation of repetitive firing (through Nav1.8/SCN10A channel current enhancement) and impairment of repolarization (by inhibiting delayed rectifier current of Kv2.1/KCNB1), with a potential contribution from tetrodotoxin-sensitive voltage-gated sodium channels (Nav) modified excitability. Enhances Nav1.8/SCN10A currents (EC(50)=1.1 uM), modifies the channel gating by a right-shift in steady-state inactivation and delays open-state inactivation. Also decreases Kv2.1/KCNB1 currents (IC(50)=0.43 uM) and causes a depolarizing shift in the voltage dependence of activation without change in steady-state inactivation. In addition, inhibits peak currents of human sodium channels (Nav1.1 to Nav1.7, IC(50)=0.38-2.3 uM) and delays fast inactivation of Nav1.1/SCN1A, Nav1.3/SCN3A, Nav1.6/SCN8A, and Nav1.7/SCN9A. In small dorsal root ganglion neurons, induces hyperexcitability by enhancing tetrodotoxin-resistant sodium currents, impairing repolarization and lowering the threshold of action potential firing, consistent with the severe pain associated with envenomation. In vivo, elicits nocifensive behavior in mice after intraplantar injection.</text>
</comment>
<comment type="subcellular location">
    <subcellularLocation>
        <location evidence="2">Secreted</location>
    </subcellularLocation>
</comment>
<comment type="tissue specificity">
    <text evidence="5">Expressed by the venom gland.</text>
</comment>
<comment type="domain">
    <text evidence="2">The presence of a 'disulfide through disulfide knot' structurally defines this protein as a knottin.</text>
</comment>
<comment type="mass spectrometry">
    <text>Monoisotopic mass.</text>
</comment>
<comment type="similarity">
    <text evidence="4">Belongs to the neurotoxin 10 (Hwtx-1) family.</text>
</comment>
<organism>
    <name type="scientific">Pelinobius muticus</name>
    <name type="common">King baboon spider</name>
    <name type="synonym">Citharischius crawshayi</name>
    <dbReference type="NCBI Taxonomy" id="753628"/>
    <lineage>
        <taxon>Eukaryota</taxon>
        <taxon>Metazoa</taxon>
        <taxon>Ecdysozoa</taxon>
        <taxon>Arthropoda</taxon>
        <taxon>Chelicerata</taxon>
        <taxon>Arachnida</taxon>
        <taxon>Araneae</taxon>
        <taxon>Mygalomorphae</taxon>
        <taxon>Theraphosidae</taxon>
        <taxon>Pelinobius</taxon>
    </lineage>
</organism>
<accession>P0DQV4</accession>
<proteinExistence type="evidence at protein level"/>
<name>TX1A_PELMU</name>
<feature type="signal peptide" evidence="1">
    <location>
        <begin position="1"/>
        <end position="19"/>
    </location>
</feature>
<feature type="propeptide" id="PRO_0000456296" evidence="5">
    <location>
        <begin position="20"/>
        <end position="43"/>
    </location>
</feature>
<feature type="chain" id="PRO_0000456297" description="Delta/kappa-theraphotoxin-Pm1a" evidence="5">
    <location>
        <begin position="44"/>
        <end position="85"/>
    </location>
</feature>
<feature type="disulfide bond" evidence="2">
    <location>
        <begin position="50"/>
        <end position="64"/>
    </location>
</feature>
<feature type="disulfide bond" evidence="2">
    <location>
        <begin position="57"/>
        <end position="69"/>
    </location>
</feature>
<feature type="disulfide bond" evidence="2">
    <location>
        <begin position="63"/>
        <end position="77"/>
    </location>
</feature>
<protein>
    <recommendedName>
        <fullName evidence="3">Delta/kappa-theraphotoxin-Pm1a</fullName>
        <shortName evidence="3">Delta/kappa-TRTX-Pm1a</shortName>
    </recommendedName>
</protein>
<sequence>MKTFVFIVLVALAFVLTAAKEERANPSELVSALAELVMLDAERGVDKPGCRYLFGGCKSDDDCCPRLGCKGKGHDYCAWDGTFSD</sequence>
<keyword id="KW-1015">Disulfide bond</keyword>
<keyword id="KW-0872">Ion channel impairing toxin</keyword>
<keyword id="KW-0960">Knottin</keyword>
<keyword id="KW-0528">Neurotoxin</keyword>
<keyword id="KW-0632">Potassium channel impairing toxin</keyword>
<keyword id="KW-0964">Secreted</keyword>
<keyword id="KW-0732">Signal</keyword>
<keyword id="KW-0800">Toxin</keyword>
<keyword id="KW-1220">Voltage-gated potassium channel impairing toxin</keyword>
<keyword id="KW-0738">Voltage-gated sodium channel impairing toxin</keyword>
<reference key="1">
    <citation type="journal article" date="2022" name="Proc. Natl. Acad. Sci. U.S.A.">
        <title>Multitarget nociceptor sensitization by a promiscuous peptide from the venom of the King Baboon spider.</title>
        <authorList>
            <person name="Finol-Urdaneta R.K."/>
            <person name="Ziegman R."/>
            <person name="Dekan Z."/>
            <person name="McArthur J.R."/>
            <person name="Heitmann S."/>
            <person name="Luna-Ramirez K."/>
            <person name="Tae H.S."/>
            <person name="Mueller A."/>
            <person name="Starobova H."/>
            <person name="Chin Y.K."/>
            <person name="Wingerd J.S."/>
            <person name="Undheim E.A.B."/>
            <person name="Cristofori-Armstrong B."/>
            <person name="Hill A.P."/>
            <person name="Herzig V."/>
            <person name="King G.F."/>
            <person name="Vetter I."/>
            <person name="Rash L.D."/>
            <person name="Adams D.J."/>
            <person name="Alewood P.F."/>
        </authorList>
    </citation>
    <scope>NUCLEOTIDE SEQUENCE [MRNA]</scope>
    <scope>FUNCTION</scope>
    <scope>BIOASSAY</scope>
    <scope>SUBCELLULAR LOCATION</scope>
    <scope>STRUCTURE BY NMR OF 44-85</scope>
    <scope>DISULFIDE BONDS</scope>
    <scope>SYNTHESIS OF 44-85</scope>
    <scope>MASS SPECTROMETRY</scope>
    <source>
        <tissue>Venom</tissue>
        <tissue>Venom gland</tissue>
    </source>
</reference>
<dbReference type="SMR" id="P0DQV4"/>
<dbReference type="GO" id="GO:0005576">
    <property type="term" value="C:extracellular region"/>
    <property type="evidence" value="ECO:0007669"/>
    <property type="project" value="UniProtKB-SubCell"/>
</dbReference>
<dbReference type="GO" id="GO:0008200">
    <property type="term" value="F:ion channel inhibitor activity"/>
    <property type="evidence" value="ECO:0007669"/>
    <property type="project" value="InterPro"/>
</dbReference>
<dbReference type="GO" id="GO:0015459">
    <property type="term" value="F:potassium channel regulator activity"/>
    <property type="evidence" value="ECO:0007669"/>
    <property type="project" value="UniProtKB-KW"/>
</dbReference>
<dbReference type="GO" id="GO:0017080">
    <property type="term" value="F:sodium channel regulator activity"/>
    <property type="evidence" value="ECO:0007669"/>
    <property type="project" value="UniProtKB-KW"/>
</dbReference>
<dbReference type="GO" id="GO:0090729">
    <property type="term" value="F:toxin activity"/>
    <property type="evidence" value="ECO:0007669"/>
    <property type="project" value="UniProtKB-KW"/>
</dbReference>
<dbReference type="InterPro" id="IPR011696">
    <property type="entry name" value="Huwentoxin-1"/>
</dbReference>
<dbReference type="Pfam" id="PF07740">
    <property type="entry name" value="Toxin_12"/>
    <property type="match status" value="1"/>
</dbReference>
<dbReference type="SUPFAM" id="SSF57059">
    <property type="entry name" value="omega toxin-like"/>
    <property type="match status" value="1"/>
</dbReference>
<evidence type="ECO:0000255" key="1"/>
<evidence type="ECO:0000269" key="2">
    <source>
    </source>
</evidence>
<evidence type="ECO:0000303" key="3">
    <source>
    </source>
</evidence>
<evidence type="ECO:0000305" key="4"/>
<evidence type="ECO:0000305" key="5">
    <source>
    </source>
</evidence>